<evidence type="ECO:0000250" key="1"/>
<evidence type="ECO:0000256" key="2">
    <source>
        <dbReference type="SAM" id="MobiDB-lite"/>
    </source>
</evidence>
<evidence type="ECO:0000305" key="3"/>
<protein>
    <recommendedName>
        <fullName>Chromosome segregation in meiosis protein 3</fullName>
    </recommendedName>
</protein>
<name>CSM3_CANGA</name>
<keyword id="KW-0131">Cell cycle</keyword>
<keyword id="KW-0227">DNA damage</keyword>
<keyword id="KW-0234">DNA repair</keyword>
<keyword id="KW-0236">DNA replication inhibitor</keyword>
<keyword id="KW-0469">Meiosis</keyword>
<keyword id="KW-0539">Nucleus</keyword>
<keyword id="KW-1185">Reference proteome</keyword>
<reference key="1">
    <citation type="journal article" date="2004" name="Nature">
        <title>Genome evolution in yeasts.</title>
        <authorList>
            <person name="Dujon B."/>
            <person name="Sherman D."/>
            <person name="Fischer G."/>
            <person name="Durrens P."/>
            <person name="Casaregola S."/>
            <person name="Lafontaine I."/>
            <person name="de Montigny J."/>
            <person name="Marck C."/>
            <person name="Neuveglise C."/>
            <person name="Talla E."/>
            <person name="Goffard N."/>
            <person name="Frangeul L."/>
            <person name="Aigle M."/>
            <person name="Anthouard V."/>
            <person name="Babour A."/>
            <person name="Barbe V."/>
            <person name="Barnay S."/>
            <person name="Blanchin S."/>
            <person name="Beckerich J.-M."/>
            <person name="Beyne E."/>
            <person name="Bleykasten C."/>
            <person name="Boisrame A."/>
            <person name="Boyer J."/>
            <person name="Cattolico L."/>
            <person name="Confanioleri F."/>
            <person name="de Daruvar A."/>
            <person name="Despons L."/>
            <person name="Fabre E."/>
            <person name="Fairhead C."/>
            <person name="Ferry-Dumazet H."/>
            <person name="Groppi A."/>
            <person name="Hantraye F."/>
            <person name="Hennequin C."/>
            <person name="Jauniaux N."/>
            <person name="Joyet P."/>
            <person name="Kachouri R."/>
            <person name="Kerrest A."/>
            <person name="Koszul R."/>
            <person name="Lemaire M."/>
            <person name="Lesur I."/>
            <person name="Ma L."/>
            <person name="Muller H."/>
            <person name="Nicaud J.-M."/>
            <person name="Nikolski M."/>
            <person name="Oztas S."/>
            <person name="Ozier-Kalogeropoulos O."/>
            <person name="Pellenz S."/>
            <person name="Potier S."/>
            <person name="Richard G.-F."/>
            <person name="Straub M.-L."/>
            <person name="Suleau A."/>
            <person name="Swennen D."/>
            <person name="Tekaia F."/>
            <person name="Wesolowski-Louvel M."/>
            <person name="Westhof E."/>
            <person name="Wirth B."/>
            <person name="Zeniou-Meyer M."/>
            <person name="Zivanovic Y."/>
            <person name="Bolotin-Fukuhara M."/>
            <person name="Thierry A."/>
            <person name="Bouchier C."/>
            <person name="Caudron B."/>
            <person name="Scarpelli C."/>
            <person name="Gaillardin C."/>
            <person name="Weissenbach J."/>
            <person name="Wincker P."/>
            <person name="Souciet J.-L."/>
        </authorList>
    </citation>
    <scope>NUCLEOTIDE SEQUENCE [LARGE SCALE GENOMIC DNA]</scope>
    <source>
        <strain>ATCC 2001 / BCRC 20586 / JCM 3761 / NBRC 0622 / NRRL Y-65 / CBS 138</strain>
    </source>
</reference>
<gene>
    <name type="primary">CSM3</name>
    <name type="ordered locus">CAGL0F06149g</name>
</gene>
<accession>Q6FU57</accession>
<organism>
    <name type="scientific">Candida glabrata (strain ATCC 2001 / BCRC 20586 / JCM 3761 / NBRC 0622 / NRRL Y-65 / CBS 138)</name>
    <name type="common">Yeast</name>
    <name type="synonym">Nakaseomyces glabratus</name>
    <dbReference type="NCBI Taxonomy" id="284593"/>
    <lineage>
        <taxon>Eukaryota</taxon>
        <taxon>Fungi</taxon>
        <taxon>Dikarya</taxon>
        <taxon>Ascomycota</taxon>
        <taxon>Saccharomycotina</taxon>
        <taxon>Saccharomycetes</taxon>
        <taxon>Saccharomycetales</taxon>
        <taxon>Saccharomycetaceae</taxon>
        <taxon>Nakaseomyces</taxon>
    </lineage>
</organism>
<sequence length="309" mass="34370">MDEDDMLMLGVGAEPTQHAEIEDPLTGGVASDPTMINDDPTAVNAKVRRPQVKLTAERLLSPNGLPYVMKHAPKRVRISKSRSTYKNLEHIIQFYQLWAHELFPKAKFKDFVRLCNSLGKTDADLRNYRTELFRADMENQFGDGYRSDKQNPANNSQPVTSTQLPNNDANSNDENNNVENDTNQLITGGQETTRHLFARDEEDDDDSDLYRSVPPPSSIAHESATSNTHAVPTSDTTLPISDNNPKGVTNSDGTVIGISEEDELLAMEEELNNYATQKIEELGDDKDTGIDPGEEEDEDALDAMKELGF</sequence>
<proteinExistence type="inferred from homology"/>
<feature type="chain" id="PRO_0000301715" description="Chromosome segregation in meiosis protein 3">
    <location>
        <begin position="1"/>
        <end position="309"/>
    </location>
</feature>
<feature type="region of interest" description="Disordered" evidence="2">
    <location>
        <begin position="141"/>
        <end position="254"/>
    </location>
</feature>
<feature type="region of interest" description="Disordered" evidence="2">
    <location>
        <begin position="275"/>
        <end position="309"/>
    </location>
</feature>
<feature type="compositionally biased region" description="Polar residues" evidence="2">
    <location>
        <begin position="150"/>
        <end position="165"/>
    </location>
</feature>
<feature type="compositionally biased region" description="Low complexity" evidence="2">
    <location>
        <begin position="166"/>
        <end position="183"/>
    </location>
</feature>
<feature type="compositionally biased region" description="Polar residues" evidence="2">
    <location>
        <begin position="223"/>
        <end position="253"/>
    </location>
</feature>
<feature type="compositionally biased region" description="Basic and acidic residues" evidence="2">
    <location>
        <begin position="278"/>
        <end position="289"/>
    </location>
</feature>
<feature type="compositionally biased region" description="Acidic residues" evidence="2">
    <location>
        <begin position="292"/>
        <end position="301"/>
    </location>
</feature>
<dbReference type="EMBL" id="CR380952">
    <property type="protein sequence ID" value="CAG59161.1"/>
    <property type="molecule type" value="Genomic_DNA"/>
</dbReference>
<dbReference type="RefSeq" id="XP_446237.1">
    <property type="nucleotide sequence ID" value="XM_446237.1"/>
</dbReference>
<dbReference type="SMR" id="Q6FU57"/>
<dbReference type="FunCoup" id="Q6FU57">
    <property type="interactions" value="286"/>
</dbReference>
<dbReference type="STRING" id="284593.Q6FU57"/>
<dbReference type="EnsemblFungi" id="CAGL0F06149g-T">
    <property type="protein sequence ID" value="CAGL0F06149g-T-p1"/>
    <property type="gene ID" value="CAGL0F06149g"/>
</dbReference>
<dbReference type="KEGG" id="cgr:2887729"/>
<dbReference type="CGD" id="CAL0131030">
    <property type="gene designation" value="CAGL0F06149g"/>
</dbReference>
<dbReference type="VEuPathDB" id="FungiDB:CAGL0F06149g"/>
<dbReference type="eggNOG" id="KOG3004">
    <property type="taxonomic scope" value="Eukaryota"/>
</dbReference>
<dbReference type="HOGENOM" id="CLU_068300_0_0_1"/>
<dbReference type="InParanoid" id="Q6FU57"/>
<dbReference type="Proteomes" id="UP000002428">
    <property type="component" value="Chromosome F"/>
</dbReference>
<dbReference type="GO" id="GO:0031298">
    <property type="term" value="C:replication fork protection complex"/>
    <property type="evidence" value="ECO:0007669"/>
    <property type="project" value="EnsemblFungi"/>
</dbReference>
<dbReference type="GO" id="GO:0003677">
    <property type="term" value="F:DNA binding"/>
    <property type="evidence" value="ECO:0007669"/>
    <property type="project" value="TreeGrafter"/>
</dbReference>
<dbReference type="GO" id="GO:0006281">
    <property type="term" value="P:DNA repair"/>
    <property type="evidence" value="ECO:0007669"/>
    <property type="project" value="UniProtKB-KW"/>
</dbReference>
<dbReference type="GO" id="GO:0000076">
    <property type="term" value="P:DNA replication checkpoint signaling"/>
    <property type="evidence" value="ECO:0007669"/>
    <property type="project" value="InterPro"/>
</dbReference>
<dbReference type="GO" id="GO:0034087">
    <property type="term" value="P:establishment of mitotic sister chromatid cohesion"/>
    <property type="evidence" value="ECO:0007669"/>
    <property type="project" value="EnsemblFungi"/>
</dbReference>
<dbReference type="GO" id="GO:0043570">
    <property type="term" value="P:maintenance of DNA repeat elements"/>
    <property type="evidence" value="ECO:0007669"/>
    <property type="project" value="EnsemblFungi"/>
</dbReference>
<dbReference type="GO" id="GO:0045132">
    <property type="term" value="P:meiotic chromosome segregation"/>
    <property type="evidence" value="ECO:0007669"/>
    <property type="project" value="EnsemblFungi"/>
</dbReference>
<dbReference type="GO" id="GO:0043111">
    <property type="term" value="P:replication fork arrest"/>
    <property type="evidence" value="ECO:0007669"/>
    <property type="project" value="EnsemblFungi"/>
</dbReference>
<dbReference type="GO" id="GO:0031297">
    <property type="term" value="P:replication fork processing"/>
    <property type="evidence" value="ECO:0007669"/>
    <property type="project" value="InterPro"/>
</dbReference>
<dbReference type="InterPro" id="IPR012923">
    <property type="entry name" value="Csm3"/>
</dbReference>
<dbReference type="InterPro" id="IPR040038">
    <property type="entry name" value="TIPIN/Csm3/Swi3"/>
</dbReference>
<dbReference type="PANTHER" id="PTHR13220">
    <property type="entry name" value="TIMELESS INTERACTING-RELATED"/>
    <property type="match status" value="1"/>
</dbReference>
<dbReference type="PANTHER" id="PTHR13220:SF11">
    <property type="entry name" value="TIMELESS-INTERACTING PROTEIN"/>
    <property type="match status" value="1"/>
</dbReference>
<dbReference type="Pfam" id="PF07962">
    <property type="entry name" value="Swi3"/>
    <property type="match status" value="1"/>
</dbReference>
<comment type="function">
    <text evidence="1">Forms a fork protection complex (FPC) with TOF1 and which is required for chromosome segregation during meiosis and DNA damage repair. FPC coordinates leading and lagging strand synthesis and moves with the replication fork. FPC stabilizes replication forks in a configuration that is recognized by replication checkpoint sensors (By similarity).</text>
</comment>
<comment type="subunit">
    <text evidence="1">Component of the fork protection complex (FPC) consisting of TOF1 and CSM3.</text>
</comment>
<comment type="subcellular location">
    <subcellularLocation>
        <location evidence="1">Nucleus</location>
    </subcellularLocation>
</comment>
<comment type="similarity">
    <text evidence="3">Belongs to the CSM3 family.</text>
</comment>